<proteinExistence type="inferred from homology"/>
<comment type="function">
    <text evidence="1">A key translational regulator that binds mRNA to regulate translation initiation and/or mRNA stability. Mediates global changes in gene expression, shifting from rapid growth to stress survival by linking envelope stress, the stringent response and the catabolite repression systems. Usually binds in the 5'-UTR; binding at or near the Shine-Dalgarno sequence prevents ribosome-binding, repressing translation, binding elsewhere in the 5'-UTR can activate translation and/or stabilize the mRNA. Its function is antagonized by small RNA(s).</text>
</comment>
<comment type="subunit">
    <text evidence="1">Homodimer; the beta-strands of each monomer intercalate to form a hydrophobic core, while the alpha-helices form wings that extend away from the core.</text>
</comment>
<comment type="subcellular location">
    <subcellularLocation>
        <location evidence="1">Cytoplasm</location>
    </subcellularLocation>
</comment>
<comment type="similarity">
    <text evidence="1">Belongs to the CsrA/RsmA family.</text>
</comment>
<accession>Q87Z65</accession>
<organism>
    <name type="scientific">Pseudomonas syringae pv. tomato (strain ATCC BAA-871 / DC3000)</name>
    <dbReference type="NCBI Taxonomy" id="223283"/>
    <lineage>
        <taxon>Bacteria</taxon>
        <taxon>Pseudomonadati</taxon>
        <taxon>Pseudomonadota</taxon>
        <taxon>Gammaproteobacteria</taxon>
        <taxon>Pseudomonadales</taxon>
        <taxon>Pseudomonadaceae</taxon>
        <taxon>Pseudomonas</taxon>
    </lineage>
</organism>
<protein>
    <recommendedName>
        <fullName evidence="1">Translational regulator CsrA 3</fullName>
    </recommendedName>
    <alternativeName>
        <fullName evidence="1">Carbon storage regulator 3</fullName>
    </alternativeName>
</protein>
<dbReference type="EMBL" id="AE016853">
    <property type="protein sequence ID" value="AAO57040.1"/>
    <property type="molecule type" value="Genomic_DNA"/>
</dbReference>
<dbReference type="RefSeq" id="NP_793345.1">
    <property type="nucleotide sequence ID" value="NC_004578.1"/>
</dbReference>
<dbReference type="SMR" id="Q87Z65"/>
<dbReference type="STRING" id="223283.PSPTO_3566"/>
<dbReference type="KEGG" id="pst:PSPTO_3566"/>
<dbReference type="PATRIC" id="fig|223283.9.peg.3655"/>
<dbReference type="eggNOG" id="COG1551">
    <property type="taxonomic scope" value="Bacteria"/>
</dbReference>
<dbReference type="HOGENOM" id="CLU_164837_2_1_6"/>
<dbReference type="OrthoDB" id="9809061at2"/>
<dbReference type="PhylomeDB" id="Q87Z65"/>
<dbReference type="Proteomes" id="UP000002515">
    <property type="component" value="Chromosome"/>
</dbReference>
<dbReference type="GO" id="GO:0005829">
    <property type="term" value="C:cytosol"/>
    <property type="evidence" value="ECO:0007669"/>
    <property type="project" value="TreeGrafter"/>
</dbReference>
<dbReference type="GO" id="GO:0048027">
    <property type="term" value="F:mRNA 5'-UTR binding"/>
    <property type="evidence" value="ECO:0007669"/>
    <property type="project" value="UniProtKB-UniRule"/>
</dbReference>
<dbReference type="GO" id="GO:0006402">
    <property type="term" value="P:mRNA catabolic process"/>
    <property type="evidence" value="ECO:0007669"/>
    <property type="project" value="InterPro"/>
</dbReference>
<dbReference type="GO" id="GO:0045947">
    <property type="term" value="P:negative regulation of translational initiation"/>
    <property type="evidence" value="ECO:0007669"/>
    <property type="project" value="UniProtKB-UniRule"/>
</dbReference>
<dbReference type="GO" id="GO:0045948">
    <property type="term" value="P:positive regulation of translational initiation"/>
    <property type="evidence" value="ECO:0007669"/>
    <property type="project" value="UniProtKB-UniRule"/>
</dbReference>
<dbReference type="GO" id="GO:0006109">
    <property type="term" value="P:regulation of carbohydrate metabolic process"/>
    <property type="evidence" value="ECO:0007669"/>
    <property type="project" value="UniProtKB-UniRule"/>
</dbReference>
<dbReference type="FunFam" id="2.60.40.4380:FF:000001">
    <property type="entry name" value="Translational regulator CsrA"/>
    <property type="match status" value="1"/>
</dbReference>
<dbReference type="Gene3D" id="2.60.40.4380">
    <property type="entry name" value="Translational regulator CsrA"/>
    <property type="match status" value="1"/>
</dbReference>
<dbReference type="HAMAP" id="MF_00167">
    <property type="entry name" value="CsrA"/>
    <property type="match status" value="1"/>
</dbReference>
<dbReference type="InterPro" id="IPR003751">
    <property type="entry name" value="CsrA"/>
</dbReference>
<dbReference type="InterPro" id="IPR036107">
    <property type="entry name" value="CsrA_sf"/>
</dbReference>
<dbReference type="NCBIfam" id="TIGR00202">
    <property type="entry name" value="csrA"/>
    <property type="match status" value="1"/>
</dbReference>
<dbReference type="NCBIfam" id="NF002469">
    <property type="entry name" value="PRK01712.1"/>
    <property type="match status" value="1"/>
</dbReference>
<dbReference type="PANTHER" id="PTHR34984">
    <property type="entry name" value="CARBON STORAGE REGULATOR"/>
    <property type="match status" value="1"/>
</dbReference>
<dbReference type="PANTHER" id="PTHR34984:SF1">
    <property type="entry name" value="CARBON STORAGE REGULATOR"/>
    <property type="match status" value="1"/>
</dbReference>
<dbReference type="Pfam" id="PF02599">
    <property type="entry name" value="CsrA"/>
    <property type="match status" value="1"/>
</dbReference>
<dbReference type="SUPFAM" id="SSF117130">
    <property type="entry name" value="CsrA-like"/>
    <property type="match status" value="1"/>
</dbReference>
<gene>
    <name evidence="1" type="primary">csrA3</name>
    <name type="synonym">csrA-3</name>
    <name type="ordered locus">PSPTO_3566</name>
</gene>
<feature type="chain" id="PRO_0000177085" description="Translational regulator CsrA 3">
    <location>
        <begin position="1"/>
        <end position="62"/>
    </location>
</feature>
<name>CSRA3_PSESM</name>
<keyword id="KW-0010">Activator</keyword>
<keyword id="KW-0963">Cytoplasm</keyword>
<keyword id="KW-1185">Reference proteome</keyword>
<keyword id="KW-0678">Repressor</keyword>
<keyword id="KW-0694">RNA-binding</keyword>
<keyword id="KW-0810">Translation regulation</keyword>
<sequence>MLILTRKVGESINIGDEITVTILGVQGLQVRLGINAPKNVSVHREEIYKRIQAELAPNQDPQ</sequence>
<evidence type="ECO:0000255" key="1">
    <source>
        <dbReference type="HAMAP-Rule" id="MF_00167"/>
    </source>
</evidence>
<reference key="1">
    <citation type="journal article" date="2003" name="Proc. Natl. Acad. Sci. U.S.A.">
        <title>The complete genome sequence of the Arabidopsis and tomato pathogen Pseudomonas syringae pv. tomato DC3000.</title>
        <authorList>
            <person name="Buell C.R."/>
            <person name="Joardar V."/>
            <person name="Lindeberg M."/>
            <person name="Selengut J."/>
            <person name="Paulsen I.T."/>
            <person name="Gwinn M.L."/>
            <person name="Dodson R.J."/>
            <person name="DeBoy R.T."/>
            <person name="Durkin A.S."/>
            <person name="Kolonay J.F."/>
            <person name="Madupu R."/>
            <person name="Daugherty S.C."/>
            <person name="Brinkac L.M."/>
            <person name="Beanan M.J."/>
            <person name="Haft D.H."/>
            <person name="Nelson W.C."/>
            <person name="Davidsen T.M."/>
            <person name="Zafar N."/>
            <person name="Zhou L."/>
            <person name="Liu J."/>
            <person name="Yuan Q."/>
            <person name="Khouri H.M."/>
            <person name="Fedorova N.B."/>
            <person name="Tran B."/>
            <person name="Russell D."/>
            <person name="Berry K.J."/>
            <person name="Utterback T.R."/>
            <person name="Van Aken S.E."/>
            <person name="Feldblyum T.V."/>
            <person name="D'Ascenzo M."/>
            <person name="Deng W.-L."/>
            <person name="Ramos A.R."/>
            <person name="Alfano J.R."/>
            <person name="Cartinhour S."/>
            <person name="Chatterjee A.K."/>
            <person name="Delaney T.P."/>
            <person name="Lazarowitz S.G."/>
            <person name="Martin G.B."/>
            <person name="Schneider D.J."/>
            <person name="Tang X."/>
            <person name="Bender C.L."/>
            <person name="White O."/>
            <person name="Fraser C.M."/>
            <person name="Collmer A."/>
        </authorList>
    </citation>
    <scope>NUCLEOTIDE SEQUENCE [LARGE SCALE GENOMIC DNA]</scope>
    <source>
        <strain>ATCC BAA-871 / DC3000</strain>
    </source>
</reference>